<keyword id="KW-1185">Reference proteome</keyword>
<dbReference type="EMBL" id="AL009126">
    <property type="protein sequence ID" value="CAB13658.2"/>
    <property type="molecule type" value="Genomic_DNA"/>
</dbReference>
<dbReference type="PIR" id="D69894">
    <property type="entry name" value="D69894"/>
</dbReference>
<dbReference type="RefSeq" id="NP_389657.2">
    <property type="nucleotide sequence ID" value="NC_000964.3"/>
</dbReference>
<dbReference type="RefSeq" id="WP_003231626.1">
    <property type="nucleotide sequence ID" value="NZ_OZ025638.1"/>
</dbReference>
<dbReference type="SMR" id="O31807"/>
<dbReference type="FunCoup" id="O31807">
    <property type="interactions" value="11"/>
</dbReference>
<dbReference type="STRING" id="224308.BSU17740"/>
<dbReference type="PaxDb" id="224308-BSU17740"/>
<dbReference type="EnsemblBacteria" id="CAB13658">
    <property type="protein sequence ID" value="CAB13658"/>
    <property type="gene ID" value="BSU_17740"/>
</dbReference>
<dbReference type="GeneID" id="939516"/>
<dbReference type="KEGG" id="bsu:BSU17740"/>
<dbReference type="PATRIC" id="fig|224308.179.peg.1932"/>
<dbReference type="InParanoid" id="O31807"/>
<dbReference type="OrthoDB" id="2906583at2"/>
<dbReference type="BioCyc" id="BSUB:BSU17740-MONOMER"/>
<dbReference type="Proteomes" id="UP000001570">
    <property type="component" value="Chromosome"/>
</dbReference>
<feature type="chain" id="PRO_0000049649" description="Uncharacterized protein YnzB">
    <location>
        <begin position="1"/>
        <end position="62"/>
    </location>
</feature>
<reference key="1">
    <citation type="journal article" date="1997" name="Nature">
        <title>The complete genome sequence of the Gram-positive bacterium Bacillus subtilis.</title>
        <authorList>
            <person name="Kunst F."/>
            <person name="Ogasawara N."/>
            <person name="Moszer I."/>
            <person name="Albertini A.M."/>
            <person name="Alloni G."/>
            <person name="Azevedo V."/>
            <person name="Bertero M.G."/>
            <person name="Bessieres P."/>
            <person name="Bolotin A."/>
            <person name="Borchert S."/>
            <person name="Borriss R."/>
            <person name="Boursier L."/>
            <person name="Brans A."/>
            <person name="Braun M."/>
            <person name="Brignell S.C."/>
            <person name="Bron S."/>
            <person name="Brouillet S."/>
            <person name="Bruschi C.V."/>
            <person name="Caldwell B."/>
            <person name="Capuano V."/>
            <person name="Carter N.M."/>
            <person name="Choi S.-K."/>
            <person name="Codani J.-J."/>
            <person name="Connerton I.F."/>
            <person name="Cummings N.J."/>
            <person name="Daniel R.A."/>
            <person name="Denizot F."/>
            <person name="Devine K.M."/>
            <person name="Duesterhoeft A."/>
            <person name="Ehrlich S.D."/>
            <person name="Emmerson P.T."/>
            <person name="Entian K.-D."/>
            <person name="Errington J."/>
            <person name="Fabret C."/>
            <person name="Ferrari E."/>
            <person name="Foulger D."/>
            <person name="Fritz C."/>
            <person name="Fujita M."/>
            <person name="Fujita Y."/>
            <person name="Fuma S."/>
            <person name="Galizzi A."/>
            <person name="Galleron N."/>
            <person name="Ghim S.-Y."/>
            <person name="Glaser P."/>
            <person name="Goffeau A."/>
            <person name="Golightly E.J."/>
            <person name="Grandi G."/>
            <person name="Guiseppi G."/>
            <person name="Guy B.J."/>
            <person name="Haga K."/>
            <person name="Haiech J."/>
            <person name="Harwood C.R."/>
            <person name="Henaut A."/>
            <person name="Hilbert H."/>
            <person name="Holsappel S."/>
            <person name="Hosono S."/>
            <person name="Hullo M.-F."/>
            <person name="Itaya M."/>
            <person name="Jones L.-M."/>
            <person name="Joris B."/>
            <person name="Karamata D."/>
            <person name="Kasahara Y."/>
            <person name="Klaerr-Blanchard M."/>
            <person name="Klein C."/>
            <person name="Kobayashi Y."/>
            <person name="Koetter P."/>
            <person name="Koningstein G."/>
            <person name="Krogh S."/>
            <person name="Kumano M."/>
            <person name="Kurita K."/>
            <person name="Lapidus A."/>
            <person name="Lardinois S."/>
            <person name="Lauber J."/>
            <person name="Lazarevic V."/>
            <person name="Lee S.-M."/>
            <person name="Levine A."/>
            <person name="Liu H."/>
            <person name="Masuda S."/>
            <person name="Mauel C."/>
            <person name="Medigue C."/>
            <person name="Medina N."/>
            <person name="Mellado R.P."/>
            <person name="Mizuno M."/>
            <person name="Moestl D."/>
            <person name="Nakai S."/>
            <person name="Noback M."/>
            <person name="Noone D."/>
            <person name="O'Reilly M."/>
            <person name="Ogawa K."/>
            <person name="Ogiwara A."/>
            <person name="Oudega B."/>
            <person name="Park S.-H."/>
            <person name="Parro V."/>
            <person name="Pohl T.M."/>
            <person name="Portetelle D."/>
            <person name="Porwollik S."/>
            <person name="Prescott A.M."/>
            <person name="Presecan E."/>
            <person name="Pujic P."/>
            <person name="Purnelle B."/>
            <person name="Rapoport G."/>
            <person name="Rey M."/>
            <person name="Reynolds S."/>
            <person name="Rieger M."/>
            <person name="Rivolta C."/>
            <person name="Rocha E."/>
            <person name="Roche B."/>
            <person name="Rose M."/>
            <person name="Sadaie Y."/>
            <person name="Sato T."/>
            <person name="Scanlan E."/>
            <person name="Schleich S."/>
            <person name="Schroeter R."/>
            <person name="Scoffone F."/>
            <person name="Sekiguchi J."/>
            <person name="Sekowska A."/>
            <person name="Seror S.J."/>
            <person name="Serror P."/>
            <person name="Shin B.-S."/>
            <person name="Soldo B."/>
            <person name="Sorokin A."/>
            <person name="Tacconi E."/>
            <person name="Takagi T."/>
            <person name="Takahashi H."/>
            <person name="Takemaru K."/>
            <person name="Takeuchi M."/>
            <person name="Tamakoshi A."/>
            <person name="Tanaka T."/>
            <person name="Terpstra P."/>
            <person name="Tognoni A."/>
            <person name="Tosato V."/>
            <person name="Uchiyama S."/>
            <person name="Vandenbol M."/>
            <person name="Vannier F."/>
            <person name="Vassarotti A."/>
            <person name="Viari A."/>
            <person name="Wambutt R."/>
            <person name="Wedler E."/>
            <person name="Wedler H."/>
            <person name="Weitzenegger T."/>
            <person name="Winters P."/>
            <person name="Wipat A."/>
            <person name="Yamamoto H."/>
            <person name="Yamane K."/>
            <person name="Yasumoto K."/>
            <person name="Yata K."/>
            <person name="Yoshida K."/>
            <person name="Yoshikawa H.-F."/>
            <person name="Zumstein E."/>
            <person name="Yoshikawa H."/>
            <person name="Danchin A."/>
        </authorList>
    </citation>
    <scope>NUCLEOTIDE SEQUENCE [LARGE SCALE GENOMIC DNA]</scope>
    <source>
        <strain>168</strain>
    </source>
</reference>
<reference key="2">
    <citation type="journal article" date="2009" name="Microbiology">
        <title>From a consortium sequence to a unified sequence: the Bacillus subtilis 168 reference genome a decade later.</title>
        <authorList>
            <person name="Barbe V."/>
            <person name="Cruveiller S."/>
            <person name="Kunst F."/>
            <person name="Lenoble P."/>
            <person name="Meurice G."/>
            <person name="Sekowska A."/>
            <person name="Vallenet D."/>
            <person name="Wang T."/>
            <person name="Moszer I."/>
            <person name="Medigue C."/>
            <person name="Danchin A."/>
        </authorList>
    </citation>
    <scope>SEQUENCE REVISION TO 30</scope>
</reference>
<protein>
    <recommendedName>
        <fullName>Uncharacterized protein YnzB</fullName>
    </recommendedName>
</protein>
<gene>
    <name type="primary">ynzB</name>
    <name type="ordered locus">BSU17740</name>
</gene>
<proteinExistence type="predicted"/>
<name>YNZB_BACSU</name>
<organism>
    <name type="scientific">Bacillus subtilis (strain 168)</name>
    <dbReference type="NCBI Taxonomy" id="224308"/>
    <lineage>
        <taxon>Bacteria</taxon>
        <taxon>Bacillati</taxon>
        <taxon>Bacillota</taxon>
        <taxon>Bacilli</taxon>
        <taxon>Bacillales</taxon>
        <taxon>Bacillaceae</taxon>
        <taxon>Bacillus</taxon>
    </lineage>
</organism>
<sequence length="62" mass="6971">MLGKIKAAIDNSPGKPARILVSEKAFQQLEEEMRFVYVSKPKTIMGIPVEVSDQAESFKLEF</sequence>
<accession>O31807</accession>